<organism>
    <name type="scientific">Penicillium brasilianum</name>
    <dbReference type="NCBI Taxonomy" id="104259"/>
    <lineage>
        <taxon>Eukaryota</taxon>
        <taxon>Fungi</taxon>
        <taxon>Dikarya</taxon>
        <taxon>Ascomycota</taxon>
        <taxon>Pezizomycotina</taxon>
        <taxon>Eurotiomycetes</taxon>
        <taxon>Eurotiomycetidae</taxon>
        <taxon>Eurotiales</taxon>
        <taxon>Aspergillaceae</taxon>
        <taxon>Penicillium</taxon>
    </lineage>
</organism>
<name>PRHB_PENBI</name>
<accession>A0A1E1FFM3</accession>
<reference key="1">
    <citation type="journal article" date="2016" name="J. Am. Chem. Soc.">
        <title>Discovery of key dioxygenases that diverged the paraherquonin and acetoxydehydroaustin pathways in Penicillium brasilianum.</title>
        <authorList>
            <person name="Matsuda Y."/>
            <person name="Iwabuchi T."/>
            <person name="Fujimoto T."/>
            <person name="Awakawa T."/>
            <person name="Nakashima Y."/>
            <person name="Mori T."/>
            <person name="Zhang H."/>
            <person name="Hayashi F."/>
            <person name="Abe I."/>
        </authorList>
    </citation>
    <scope>NUCLEOTIDE SEQUENCE [GENOMIC DNA]</scope>
    <scope>FUNCTION</scope>
    <scope>PATHWAY</scope>
    <source>
        <strain>ATCC 22354 / NBRC 6234 / CBS 338.59 / FRR 3454 / IMI 68220</strain>
    </source>
</reference>
<reference key="2">
    <citation type="journal article" date="2017" name="Nat. Chem. Biol.">
        <title>Molecular basis for the unusual ring reconstruction in fungal meroterpenoid biogenesis.</title>
        <authorList>
            <person name="Mori T."/>
            <person name="Iwabuchi T."/>
            <person name="Hoshino S."/>
            <person name="Wang H."/>
            <person name="Matsuda Y."/>
            <person name="Abe I."/>
        </authorList>
    </citation>
    <scope>FUNCTION</scope>
</reference>
<reference key="3">
    <citation type="journal article" date="2018" name="Nat. Commun.">
        <title>Structure function and engineering of multifunctional non-heme iron dependent oxygenases in fungal meroterpenoid biosynthesis.</title>
        <authorList>
            <person name="Nakashima Y."/>
            <person name="Mori T."/>
            <person name="Nakamura H."/>
            <person name="Awakawa T."/>
            <person name="Hoshino S."/>
            <person name="Senda M."/>
            <person name="Senda T."/>
            <person name="Abe I."/>
        </authorList>
    </citation>
    <scope>FUNCTION</scope>
</reference>
<sequence length="489" mass="56591">MFSFGFLITAVVFWVVTKVIYNAYFHPLRRFPGPFLNRATRLAYIYQVLGGKIHHSVLAMHQKYGDIVRLAPDELSFSHPDAWEHIMGHKKADQEEMGKAPWFYRTFKYEALSIVNEDRKPHARLRRPMSHGFSEQSLRDQGPVIRGYVDLFCQRLREASAKSQLVVLSDWLSYVAFDIVGDLSFGEPFGCLKEGKEDEWLTSMANLGTTGVIFQCLGFFPWIKEPLVMIFAKTMRKYRDAHLSSSTEKMRRRIEFNGERPDFIQGLLQKREQLNLRLEDLVSNAQLFIGAGAESTATLLMGVAYLLLKHDRVYEKLSDEIHSAFKNVDEITLTSVGQLPYLNACINETLRYYSPACNGLPRMVPKGGGYILGEYVPENTTVAVHHWALYHREKYFADPDSFRPERFLGDLEFANDQLKALQPFHVGPRNCLGRTLVYGETRLIFVLLIFHFHLRLAEESQNWMEQRHWLMWEKSPLMVHLTPREAVLC</sequence>
<evidence type="ECO:0000250" key="1">
    <source>
        <dbReference type="UniProtKB" id="P04798"/>
    </source>
</evidence>
<evidence type="ECO:0000250" key="2">
    <source>
        <dbReference type="UniProtKB" id="Q5ATJ7"/>
    </source>
</evidence>
<evidence type="ECO:0000255" key="3"/>
<evidence type="ECO:0000255" key="4">
    <source>
        <dbReference type="PROSITE-ProRule" id="PRU00498"/>
    </source>
</evidence>
<evidence type="ECO:0000269" key="5">
    <source>
    </source>
</evidence>
<evidence type="ECO:0000269" key="6">
    <source>
    </source>
</evidence>
<evidence type="ECO:0000303" key="7">
    <source>
    </source>
</evidence>
<evidence type="ECO:0000305" key="8"/>
<evidence type="ECO:0000305" key="9">
    <source>
    </source>
</evidence>
<evidence type="ECO:0000305" key="10">
    <source>
    </source>
</evidence>
<evidence type="ECO:0000305" key="11">
    <source>
    </source>
</evidence>
<comment type="function">
    <text evidence="2 5 6 9 10 11">Cytochrome P450 monooxygenase; part of the gene cluster that mediates the biosynthesis of paraherquonin, a meroterpenoid with a unique, highly congested hexacyclic molecular architecture (PubMed:27602587). The first step of the pathway is the synthesis of 3,5-dimethylorsellinic acid (DMOA) by the polyketide synthase prhL (By similarity). Synthesis of DMOA is followed by farnesylation by the prenyltransferase prhE, methylesterification by the methyl-transferase prhM, epoxidation of the prenyl chain by the flavin-dependent monooxygenase prhF, and cyclization of the farnesyl moiety by the terpene cyclase prhH, to yield the tetracyclic intermediate, protoaustinoid A (By similarity). The short chain dehydrogenase prhI then oxidizes the C-3 alcohol group of the terpene cyclase product to transform protoaustinoid A into protoaustinoid B (PubMed:27602587). The FAD-binding monooxygenase prhJ catalyzes the oxidation of protoaustinoid B into preaustinoid A which is further oxidized into preaustinoid A1 by FAD-binding monooxygenase phrK (PubMed:27602587). Finally, prhA leads to berkeleydione via the berkeleyone B intermediate (PubMed:27602587, PubMed:29317628). PrhA is a multifunctional dioxygenase that first desaturates at C5-C6 to form berkeleyone B, followed by rearrangement of the A/B-ring to form the cycloheptadiene moiety in berkeleydione (PubMed:27602587, PubMed:29317628). Berkeleydione serves as the key intermediate for the biosynthesis of paraherquonin as well as many other meroterpenoids (Probable). The cytochrome P450 monooxygenases prhB, prhD, and prhN, as well as the isomerase prhC, are probably involved in the late stage of paraherquonin biosynthesis, after the production of berkeleydione (Probable). Especially prhC might be a multifunctional enzyme that catalyzes the D-ring expansion via intramolecular methoxy rearrangement, as well as the hydrolysis of the expanded D-ring (Probable).</text>
</comment>
<comment type="cofactor">
    <cofactor evidence="1">
        <name>heme</name>
        <dbReference type="ChEBI" id="CHEBI:30413"/>
    </cofactor>
</comment>
<comment type="pathway">
    <text evidence="9">Secondary metabolite biosynthesis; terpenoid biosynthesis.</text>
</comment>
<comment type="subcellular location">
    <subcellularLocation>
        <location evidence="3">Membrane</location>
        <topology evidence="3">Multi-pass membrane protein</topology>
    </subcellularLocation>
</comment>
<comment type="similarity">
    <text evidence="8">Belongs to the cytochrome P450 family.</text>
</comment>
<proteinExistence type="inferred from homology"/>
<keyword id="KW-0175">Coiled coil</keyword>
<keyword id="KW-0325">Glycoprotein</keyword>
<keyword id="KW-0349">Heme</keyword>
<keyword id="KW-0408">Iron</keyword>
<keyword id="KW-0472">Membrane</keyword>
<keyword id="KW-0479">Metal-binding</keyword>
<keyword id="KW-0503">Monooxygenase</keyword>
<keyword id="KW-0560">Oxidoreductase</keyword>
<keyword id="KW-0812">Transmembrane</keyword>
<keyword id="KW-1133">Transmembrane helix</keyword>
<protein>
    <recommendedName>
        <fullName evidence="7">Cytochrome P450 monooxygenase prhB</fullName>
        <ecNumber evidence="9">1.-.-.-</ecNumber>
    </recommendedName>
    <alternativeName>
        <fullName evidence="7">Paraherquonin biosynthesis cluster protein B</fullName>
    </alternativeName>
</protein>
<feature type="chain" id="PRO_0000449163" description="Cytochrome P450 monooxygenase prhB">
    <location>
        <begin position="1"/>
        <end position="489"/>
    </location>
</feature>
<feature type="transmembrane region" description="Helical" evidence="3">
    <location>
        <begin position="1"/>
        <end position="21"/>
    </location>
</feature>
<feature type="transmembrane region" description="Helical" evidence="3">
    <location>
        <begin position="212"/>
        <end position="232"/>
    </location>
</feature>
<feature type="transmembrane region" description="Helical" evidence="3">
    <location>
        <begin position="287"/>
        <end position="307"/>
    </location>
</feature>
<feature type="binding site" description="axial binding residue" evidence="1">
    <location>
        <position position="431"/>
    </location>
    <ligand>
        <name>heme</name>
        <dbReference type="ChEBI" id="CHEBI:30413"/>
    </ligand>
    <ligandPart>
        <name>Fe</name>
        <dbReference type="ChEBI" id="CHEBI:18248"/>
    </ligandPart>
</feature>
<feature type="glycosylation site" description="N-linked (GlcNAc...) asparagine" evidence="4">
    <location>
        <position position="347"/>
    </location>
</feature>
<feature type="glycosylation site" description="N-linked (GlcNAc...) asparagine" evidence="4">
    <location>
        <position position="379"/>
    </location>
</feature>
<dbReference type="EC" id="1.-.-.-" evidence="9"/>
<dbReference type="EMBL" id="LC127182">
    <property type="protein sequence ID" value="BAV69303.1"/>
    <property type="molecule type" value="Genomic_DNA"/>
</dbReference>
<dbReference type="SMR" id="A0A1E1FFM3"/>
<dbReference type="GlyCosmos" id="A0A1E1FFM3">
    <property type="glycosylation" value="2 sites, No reported glycans"/>
</dbReference>
<dbReference type="UniPathway" id="UPA00213"/>
<dbReference type="GO" id="GO:0016020">
    <property type="term" value="C:membrane"/>
    <property type="evidence" value="ECO:0007669"/>
    <property type="project" value="UniProtKB-SubCell"/>
</dbReference>
<dbReference type="GO" id="GO:0020037">
    <property type="term" value="F:heme binding"/>
    <property type="evidence" value="ECO:0007669"/>
    <property type="project" value="InterPro"/>
</dbReference>
<dbReference type="GO" id="GO:0005506">
    <property type="term" value="F:iron ion binding"/>
    <property type="evidence" value="ECO:0007669"/>
    <property type="project" value="InterPro"/>
</dbReference>
<dbReference type="GO" id="GO:0004497">
    <property type="term" value="F:monooxygenase activity"/>
    <property type="evidence" value="ECO:0007669"/>
    <property type="project" value="UniProtKB-KW"/>
</dbReference>
<dbReference type="GO" id="GO:0016705">
    <property type="term" value="F:oxidoreductase activity, acting on paired donors, with incorporation or reduction of molecular oxygen"/>
    <property type="evidence" value="ECO:0007669"/>
    <property type="project" value="InterPro"/>
</dbReference>
<dbReference type="GO" id="GO:0043386">
    <property type="term" value="P:mycotoxin biosynthetic process"/>
    <property type="evidence" value="ECO:0007669"/>
    <property type="project" value="UniProtKB-ARBA"/>
</dbReference>
<dbReference type="GO" id="GO:0016114">
    <property type="term" value="P:terpenoid biosynthetic process"/>
    <property type="evidence" value="ECO:0007669"/>
    <property type="project" value="UniProtKB-UniPathway"/>
</dbReference>
<dbReference type="CDD" id="cd11058">
    <property type="entry name" value="CYP60B-like"/>
    <property type="match status" value="1"/>
</dbReference>
<dbReference type="Gene3D" id="1.10.630.10">
    <property type="entry name" value="Cytochrome P450"/>
    <property type="match status" value="1"/>
</dbReference>
<dbReference type="InterPro" id="IPR001128">
    <property type="entry name" value="Cyt_P450"/>
</dbReference>
<dbReference type="InterPro" id="IPR017972">
    <property type="entry name" value="Cyt_P450_CS"/>
</dbReference>
<dbReference type="InterPro" id="IPR002401">
    <property type="entry name" value="Cyt_P450_E_grp-I"/>
</dbReference>
<dbReference type="InterPro" id="IPR036396">
    <property type="entry name" value="Cyt_P450_sf"/>
</dbReference>
<dbReference type="InterPro" id="IPR050121">
    <property type="entry name" value="Cytochrome_P450_monoxygenase"/>
</dbReference>
<dbReference type="PANTHER" id="PTHR24305">
    <property type="entry name" value="CYTOCHROME P450"/>
    <property type="match status" value="1"/>
</dbReference>
<dbReference type="PANTHER" id="PTHR24305:SF230">
    <property type="entry name" value="P450, PUTATIVE (EUROFUNG)-RELATED"/>
    <property type="match status" value="1"/>
</dbReference>
<dbReference type="Pfam" id="PF00067">
    <property type="entry name" value="p450"/>
    <property type="match status" value="1"/>
</dbReference>
<dbReference type="PRINTS" id="PR00463">
    <property type="entry name" value="EP450I"/>
</dbReference>
<dbReference type="PRINTS" id="PR00385">
    <property type="entry name" value="P450"/>
</dbReference>
<dbReference type="SUPFAM" id="SSF48264">
    <property type="entry name" value="Cytochrome P450"/>
    <property type="match status" value="1"/>
</dbReference>
<dbReference type="PROSITE" id="PS00086">
    <property type="entry name" value="CYTOCHROME_P450"/>
    <property type="match status" value="1"/>
</dbReference>
<gene>
    <name evidence="7" type="primary">prhB</name>
</gene>